<evidence type="ECO:0000255" key="1">
    <source>
        <dbReference type="HAMAP-Rule" id="MF_01893"/>
    </source>
</evidence>
<gene>
    <name evidence="1" type="primary">pus10</name>
    <name type="ordered locus">MTBMA_c17080</name>
</gene>
<reference key="1">
    <citation type="journal article" date="2010" name="J. Bacteriol.">
        <title>Complete genome sequence of Methanothermobacter marburgensis, a methanoarchaeon model organism.</title>
        <authorList>
            <person name="Liesegang H."/>
            <person name="Kaster A.K."/>
            <person name="Wiezer A."/>
            <person name="Goenrich M."/>
            <person name="Wollherr A."/>
            <person name="Seedorf H."/>
            <person name="Gottschalk G."/>
            <person name="Thauer R.K."/>
        </authorList>
    </citation>
    <scope>NUCLEOTIDE SEQUENCE [LARGE SCALE GENOMIC DNA]</scope>
    <source>
        <strain>ATCC BAA-927 / DSM 2133 / JCM 14651 / NBRC 100331 / OCM 82 / Marburg</strain>
    </source>
</reference>
<keyword id="KW-0413">Isomerase</keyword>
<keyword id="KW-0694">RNA-binding</keyword>
<keyword id="KW-0819">tRNA processing</keyword>
<comment type="function">
    <text evidence="1">Responsible for synthesis of pseudouridine from uracil-54 and uracil-55 in the psi GC loop of transfer RNAs.</text>
</comment>
<comment type="catalytic activity">
    <reaction evidence="1">
        <text>uridine(54) in tRNA = pseudouridine(54) in tRNA</text>
        <dbReference type="Rhea" id="RHEA:57876"/>
        <dbReference type="Rhea" id="RHEA-COMP:10193"/>
        <dbReference type="Rhea" id="RHEA-COMP:14141"/>
        <dbReference type="ChEBI" id="CHEBI:65314"/>
        <dbReference type="ChEBI" id="CHEBI:65315"/>
    </reaction>
</comment>
<comment type="catalytic activity">
    <reaction evidence="1">
        <text>uridine(55) in tRNA = pseudouridine(55) in tRNA</text>
        <dbReference type="Rhea" id="RHEA:42532"/>
        <dbReference type="Rhea" id="RHEA-COMP:10101"/>
        <dbReference type="Rhea" id="RHEA-COMP:10102"/>
        <dbReference type="ChEBI" id="CHEBI:65314"/>
        <dbReference type="ChEBI" id="CHEBI:65315"/>
        <dbReference type="EC" id="5.4.99.25"/>
    </reaction>
</comment>
<comment type="similarity">
    <text evidence="1">Belongs to the pseudouridine synthase Pus10 family.</text>
</comment>
<dbReference type="EC" id="5.4.99.25" evidence="1"/>
<dbReference type="EMBL" id="CP001710">
    <property type="protein sequence ID" value="ADL59277.1"/>
    <property type="molecule type" value="Genomic_DNA"/>
</dbReference>
<dbReference type="RefSeq" id="WP_013296487.1">
    <property type="nucleotide sequence ID" value="NC_014408.1"/>
</dbReference>
<dbReference type="SMR" id="D9PYH9"/>
<dbReference type="STRING" id="79929.MTBMA_c17080"/>
<dbReference type="PaxDb" id="79929-MTBMA_c17080"/>
<dbReference type="GeneID" id="43707563"/>
<dbReference type="GeneID" id="9705419"/>
<dbReference type="KEGG" id="mmg:MTBMA_c17080"/>
<dbReference type="PATRIC" id="fig|79929.8.peg.1648"/>
<dbReference type="HOGENOM" id="CLU_028780_2_0_2"/>
<dbReference type="OrthoDB" id="10348at2157"/>
<dbReference type="Proteomes" id="UP000000345">
    <property type="component" value="Chromosome"/>
</dbReference>
<dbReference type="GO" id="GO:0000049">
    <property type="term" value="F:tRNA binding"/>
    <property type="evidence" value="ECO:0007669"/>
    <property type="project" value="InterPro"/>
</dbReference>
<dbReference type="GO" id="GO:0160148">
    <property type="term" value="F:tRNA pseudouridine(55) synthase activity"/>
    <property type="evidence" value="ECO:0007669"/>
    <property type="project" value="UniProtKB-EC"/>
</dbReference>
<dbReference type="GO" id="GO:0031119">
    <property type="term" value="P:tRNA pseudouridine synthesis"/>
    <property type="evidence" value="ECO:0007669"/>
    <property type="project" value="UniProtKB-UniRule"/>
</dbReference>
<dbReference type="FunFam" id="3.30.70.2510:FF:000001">
    <property type="entry name" value="tRNA pseudouridine synthase Pus10"/>
    <property type="match status" value="1"/>
</dbReference>
<dbReference type="Gene3D" id="3.30.70.2510">
    <property type="match status" value="1"/>
</dbReference>
<dbReference type="Gene3D" id="3.30.70.3190">
    <property type="match status" value="1"/>
</dbReference>
<dbReference type="HAMAP" id="MF_01893">
    <property type="entry name" value="Pus10_arch"/>
    <property type="match status" value="1"/>
</dbReference>
<dbReference type="InterPro" id="IPR020103">
    <property type="entry name" value="PsdUridine_synth_cat_dom_sf"/>
</dbReference>
<dbReference type="InterPro" id="IPR005912">
    <property type="entry name" value="Pus10"/>
</dbReference>
<dbReference type="InterPro" id="IPR039894">
    <property type="entry name" value="Pus10-like"/>
</dbReference>
<dbReference type="InterPro" id="IPR048741">
    <property type="entry name" value="Pus10-like_C"/>
</dbReference>
<dbReference type="InterPro" id="IPR055174">
    <property type="entry name" value="Pus10_THUMP_arc"/>
</dbReference>
<dbReference type="InterPro" id="IPR004114">
    <property type="entry name" value="THUMP_dom"/>
</dbReference>
<dbReference type="NCBIfam" id="TIGR01213">
    <property type="entry name" value="pseudo_Pus10arc"/>
    <property type="match status" value="1"/>
</dbReference>
<dbReference type="PANTHER" id="PTHR21568">
    <property type="entry name" value="TRNA PSEUDOURIDINE SYNTHASE PUS10"/>
    <property type="match status" value="1"/>
</dbReference>
<dbReference type="PANTHER" id="PTHR21568:SF0">
    <property type="entry name" value="TRNA PSEUDOURIDINE SYNTHASE PUS10"/>
    <property type="match status" value="1"/>
</dbReference>
<dbReference type="Pfam" id="PF21238">
    <property type="entry name" value="Pus10_C"/>
    <property type="match status" value="1"/>
</dbReference>
<dbReference type="Pfam" id="PF22023">
    <property type="entry name" value="Pus10_THUMP_arc"/>
    <property type="match status" value="1"/>
</dbReference>
<dbReference type="SUPFAM" id="SSF55120">
    <property type="entry name" value="Pseudouridine synthase"/>
    <property type="match status" value="1"/>
</dbReference>
<dbReference type="PROSITE" id="PS51165">
    <property type="entry name" value="THUMP"/>
    <property type="match status" value="1"/>
</dbReference>
<organism>
    <name type="scientific">Methanothermobacter marburgensis (strain ATCC BAA-927 / DSM 2133 / JCM 14651 / NBRC 100331 / OCM 82 / Marburg)</name>
    <name type="common">Methanobacterium thermoautotrophicum</name>
    <dbReference type="NCBI Taxonomy" id="79929"/>
    <lineage>
        <taxon>Archaea</taxon>
        <taxon>Methanobacteriati</taxon>
        <taxon>Methanobacteriota</taxon>
        <taxon>Methanomada group</taxon>
        <taxon>Methanobacteria</taxon>
        <taxon>Methanobacteriales</taxon>
        <taxon>Methanobacteriaceae</taxon>
        <taxon>Methanothermobacter</taxon>
    </lineage>
</organism>
<feature type="chain" id="PRO_0000407392" description="tRNA pseudouridine synthase Pus10">
    <location>
        <begin position="1"/>
        <end position="402"/>
    </location>
</feature>
<feature type="domain" description="THUMP" evidence="1">
    <location>
        <begin position="37"/>
        <end position="159"/>
    </location>
</feature>
<feature type="active site" description="Nucleophile" evidence="1">
    <location>
        <position position="228"/>
    </location>
</feature>
<feature type="binding site" evidence="1">
    <location>
        <position position="296"/>
    </location>
    <ligand>
        <name>substrate</name>
    </ligand>
</feature>
<feature type="binding site" evidence="1">
    <location>
        <position position="364"/>
    </location>
    <ligand>
        <name>substrate</name>
    </ligand>
</feature>
<proteinExistence type="inferred from homology"/>
<protein>
    <recommendedName>
        <fullName evidence="1">tRNA pseudouridine synthase Pus10</fullName>
        <ecNumber evidence="1">5.4.99.25</ecNumber>
    </recommendedName>
    <alternativeName>
        <fullName evidence="1">tRNA pseudouridine 54/55 synthase</fullName>
        <shortName evidence="1">Psi54/55 synthase</shortName>
    </alternativeName>
</protein>
<sequence>MDVQERLDAILDITDSKICPHCLGRRFSDVMEGPGNRLRGERLVEKFSLHLEGPCLVCGDVFERLDEAALRVREKVDDLNLEYSSVLVGTRLPDDVLRIDEEIDRRLGIQVEGIKREVNRELGKRVTSILRCPADFESPDLVITVDLRGQIRVHVQINPIFIEGRYRKLVRGIPQTKWPCRSCRGRGCSRCDYTGKMYPTSVEELISEPVLEATGGSDSKFHGSGREDVDVRMLGTGRPFVLEIKEPAIRTPDLRALEDEINRRARGMVEVADLRFSSRNRKVELKESSRKKYKVYRAIVELEGAVSDEDLVKLEKLDLIRQRTPLRVSHRRADRIRERRVLEISWKRLDDHLELIIKAEGGLYIKELISGDSGRTEPSVSSILGVPARCASLDVLEVGEPA</sequence>
<accession>D9PYH9</accession>
<name>PUS10_METTM</name>